<keyword id="KW-0002">3D-structure</keyword>
<keyword id="KW-1185">Reference proteome</keyword>
<keyword id="KW-0964">Secreted</keyword>
<keyword id="KW-0732">Signal</keyword>
<comment type="function">
    <text evidence="5">Required for the growth, maintenance, and/or stability, and thus infectivity, of bradyzoite cysts.</text>
</comment>
<comment type="subunit">
    <text evidence="5">Forms a complex composed of BPK1, MCP4, MAG1, GRA8 and GRA9 (PubMed:23291621). Interacts with MCP4 (PubMed:23291621). Interacts with MAG1 (PubMed:23291621). Interacts with GRA8 (PubMed:23291621). Interacts with GRA9 (PubMed:23291621).</text>
</comment>
<comment type="subcellular location">
    <subcellularLocation>
        <location evidence="4 5">Secreted</location>
    </subcellularLocation>
    <text evidence="4 5">During the bradyzoite stage, secreted into the cyst lumen and localizes to the cyst wall.</text>
</comment>
<comment type="developmental stage">
    <text evidence="4 5">Expressed in tachyzoites and bradyzoites; expression increases following the tachyzoite to bradyzoite conversion (at protein level).</text>
</comment>
<comment type="domain">
    <text evidence="2">The protein kinase domain is predicted to be catalytically inactive.</text>
</comment>
<comment type="disruption phenotype">
    <text evidence="5">In a mouse infection model, tachyzoite growth, conversion to bradyzoites and cyst formation are normal 4 weeks post-infection (PubMed:23291621). However, cysts are smaller and their capacity to cause oral infection in a mouse host is reduced which is probably due to their increased susceptibility to the conditions in the host digestive system (PubMed:23291621).</text>
</comment>
<comment type="similarity">
    <text evidence="8">Belongs to the protein kinase superfamily. STE Ser/Thr protein kinase family. WNG subfamily.</text>
</comment>
<comment type="caution">
    <text evidence="9">Although it belongs to the protein kinase superfamily, lacks the active site residue Asp at position 227 and the Asp residue at position 245 involved in Mg(2+) chelation, suggesting that it has no protein kinase activity.</text>
</comment>
<sequence>MANTSVRRRQLLSSVLLLQWLTTVLGVAWGPNPIDGSKHGQFPSLRRTEGVSQSGSGHKGSVYRIPLADMTFWSWMSYLKELPDIDESRNPILKRLLSGSFLRRDGSTTVNVRVPARELVRLLSLTPEQQREGVSAKVRLINLLDPKYSVYEPYLYREILPKRSPLLLPSLGEYRGAFLTYIFHPLSKGLVGDMLETGRSHPDVQVLAANMVAALKSLHNLGLLHRSIELNSFSVLPDGTVVLGGLDTAAPIGTETRLWVGFFGQETAPEIDRNFLADLALTQGRHTVKSDVYSLGVAFRNLVQLLGNGNIGPEDRGAVRQDHLELLDKLSQKMIEEEPGNRPTIEEIMKDPLFEGLNFEDIEEGKARPFRYKQNRL</sequence>
<feature type="signal peptide" evidence="1">
    <location>
        <begin position="1"/>
        <end position="26"/>
    </location>
</feature>
<feature type="chain" id="PRO_5029621146" description="Bradyzoite pseudokinase 1" evidence="1">
    <location>
        <begin position="27"/>
        <end position="377"/>
    </location>
</feature>
<feature type="domain" description="Protein kinase" evidence="2">
    <location>
        <begin position="48"/>
        <end position="354"/>
    </location>
</feature>
<feature type="region of interest" description="Disordered" evidence="3">
    <location>
        <begin position="39"/>
        <end position="58"/>
    </location>
</feature>
<feature type="sequence conflict" description="In Ref. 4." evidence="8" ref="4">
    <original>I</original>
    <variation>L</variation>
    <location>
        <position position="311"/>
    </location>
</feature>
<feature type="helix" evidence="12">
    <location>
        <begin position="72"/>
        <end position="81"/>
    </location>
</feature>
<feature type="helix" evidence="12">
    <location>
        <begin position="87"/>
        <end position="89"/>
    </location>
</feature>
<feature type="helix" evidence="12">
    <location>
        <begin position="91"/>
        <end position="97"/>
    </location>
</feature>
<feature type="strand" evidence="12">
    <location>
        <begin position="108"/>
        <end position="114"/>
    </location>
</feature>
<feature type="helix" evidence="12">
    <location>
        <begin position="117"/>
        <end position="123"/>
    </location>
</feature>
<feature type="helix" evidence="12">
    <location>
        <begin position="127"/>
        <end position="132"/>
    </location>
</feature>
<feature type="strand" evidence="12">
    <location>
        <begin position="134"/>
        <end position="140"/>
    </location>
</feature>
<feature type="helix" evidence="12">
    <location>
        <begin position="146"/>
        <end position="158"/>
    </location>
</feature>
<feature type="strand" evidence="12">
    <location>
        <begin position="171"/>
        <end position="175"/>
    </location>
</feature>
<feature type="strand" evidence="12">
    <location>
        <begin position="177"/>
        <end position="185"/>
    </location>
</feature>
<feature type="strand" evidence="12">
    <location>
        <begin position="188"/>
        <end position="190"/>
    </location>
</feature>
<feature type="helix" evidence="12">
    <location>
        <begin position="191"/>
        <end position="196"/>
    </location>
</feature>
<feature type="helix" evidence="12">
    <location>
        <begin position="204"/>
        <end position="219"/>
    </location>
</feature>
<feature type="turn" evidence="12">
    <location>
        <begin position="220"/>
        <end position="222"/>
    </location>
</feature>
<feature type="helix" evidence="12">
    <location>
        <begin position="230"/>
        <end position="232"/>
    </location>
</feature>
<feature type="strand" evidence="12">
    <location>
        <begin position="233"/>
        <end position="235"/>
    </location>
</feature>
<feature type="strand" evidence="12">
    <location>
        <begin position="241"/>
        <end position="243"/>
    </location>
</feature>
<feature type="helix" evidence="12">
    <location>
        <begin position="246"/>
        <end position="248"/>
    </location>
</feature>
<feature type="helix" evidence="12">
    <location>
        <begin position="288"/>
        <end position="306"/>
    </location>
</feature>
<feature type="helix" evidence="12">
    <location>
        <begin position="321"/>
        <end position="334"/>
    </location>
</feature>
<feature type="helix" evidence="12">
    <location>
        <begin position="339"/>
        <end position="341"/>
    </location>
</feature>
<feature type="helix" evidence="12">
    <location>
        <begin position="345"/>
        <end position="349"/>
    </location>
</feature>
<feature type="helix" evidence="12">
    <location>
        <begin position="352"/>
        <end position="354"/>
    </location>
</feature>
<feature type="helix" evidence="12">
    <location>
        <begin position="359"/>
        <end position="364"/>
    </location>
</feature>
<dbReference type="EMBL" id="JAAUHK010000188">
    <property type="protein sequence ID" value="KAF4645395.1"/>
    <property type="molecule type" value="Genomic_DNA"/>
</dbReference>
<dbReference type="PDB" id="6M7Z">
    <property type="method" value="X-ray"/>
    <property type="resolution" value="2.50 A"/>
    <property type="chains" value="A/B/C/D/E/F=61-377"/>
</dbReference>
<dbReference type="PDBsum" id="6M7Z"/>
<dbReference type="SMR" id="A0A7J6KD88"/>
<dbReference type="VEuPathDB" id="ToxoDB:TGME49_253330"/>
<dbReference type="Proteomes" id="UP000557509">
    <property type="component" value="Unassembled WGS sequence"/>
</dbReference>
<dbReference type="GO" id="GO:0097570">
    <property type="term" value="C:cyst wall"/>
    <property type="evidence" value="ECO:0000314"/>
    <property type="project" value="UniProtKB"/>
</dbReference>
<dbReference type="GO" id="GO:0005615">
    <property type="term" value="C:extracellular space"/>
    <property type="evidence" value="ECO:0000314"/>
    <property type="project" value="UniProtKB"/>
</dbReference>
<dbReference type="GO" id="GO:0005524">
    <property type="term" value="F:ATP binding"/>
    <property type="evidence" value="ECO:0007669"/>
    <property type="project" value="InterPro"/>
</dbReference>
<dbReference type="GO" id="GO:0004672">
    <property type="term" value="F:protein kinase activity"/>
    <property type="evidence" value="ECO:0007669"/>
    <property type="project" value="InterPro"/>
</dbReference>
<dbReference type="Gene3D" id="1.10.510.10">
    <property type="entry name" value="Transferase(Phosphotransferase) domain 1"/>
    <property type="match status" value="1"/>
</dbReference>
<dbReference type="InterPro" id="IPR011009">
    <property type="entry name" value="Kinase-like_dom_sf"/>
</dbReference>
<dbReference type="InterPro" id="IPR000719">
    <property type="entry name" value="Prot_kinase_dom"/>
</dbReference>
<dbReference type="SUPFAM" id="SSF56112">
    <property type="entry name" value="Protein kinase-like (PK-like)"/>
    <property type="match status" value="1"/>
</dbReference>
<dbReference type="PROSITE" id="PS50011">
    <property type="entry name" value="PROTEIN_KINASE_DOM"/>
    <property type="match status" value="1"/>
</dbReference>
<reference key="1">
    <citation type="submission" date="2020-03" db="EMBL/GenBank/DDBJ databases">
        <title>Genome sequence of Toxoplasma gondii RH-88 strain.</title>
        <authorList>
            <person name="Lorenzi H.A."/>
            <person name="Venepally P."/>
            <person name="Rozenberg A."/>
            <person name="Sibley D."/>
        </authorList>
    </citation>
    <scope>NUCLEOTIDE SEQUENCE [LARGE SCALE GENOMIC DNA]</scope>
    <source>
        <strain>RH-88</strain>
    </source>
</reference>
<reference evidence="8" key="2">
    <citation type="journal article" date="2011" name="Eukaryot. Cell">
        <title>Identification of tissue cyst wall components by transcriptome analysis of in vivo and in vitro Toxoplasma gondii bradyzoites.</title>
        <authorList>
            <person name="Buchholz K.R."/>
            <person name="Fritz H.M."/>
            <person name="Chen X."/>
            <person name="Durbin-Johnson B."/>
            <person name="Rocke D.M."/>
            <person name="Ferguson D.J."/>
            <person name="Conrad P.A."/>
            <person name="Boothroyd J.C."/>
        </authorList>
    </citation>
    <scope>SUBCELLULAR LOCATION</scope>
    <scope>DEVELOPMENTAL STAGE</scope>
    <source>
        <strain evidence="4">Prugniaud</strain>
    </source>
</reference>
<reference evidence="8" key="3">
    <citation type="journal article" date="2013" name="Eukaryot. Cell">
        <title>Bradyzoite pseudokinase 1 is crucial for efficient oral infectivity of the Toxoplasma gondii tissue cyst.</title>
        <authorList>
            <person name="Buchholz K.R."/>
            <person name="Bowyer P.W."/>
            <person name="Boothroyd J.C."/>
        </authorList>
    </citation>
    <scope>FUNCTION</scope>
    <scope>IDENTIFICATION IN A COMPLEX WITH MCP4; MAG1; GRA8 AND GRA9</scope>
    <scope>INTERACTION WITH MCP4; MAG1; GRA8 AND GRA9</scope>
    <scope>SUBCELLULAR LOCATION</scope>
    <scope>DEVELOPMENTAL STAGE</scope>
    <scope>DISRUPTION PHENOTYPE</scope>
    <source>
        <strain evidence="5">Prugniaud</strain>
    </source>
</reference>
<reference evidence="11" key="4">
    <citation type="journal article" date="2019" name="Proc. Natl. Acad. Sci. U.S.A.">
        <title>Divergent kinase regulates membrane ultrastructure of the Toxoplasma parasitophorous vacuole.</title>
        <authorList>
            <person name="Beraki T."/>
            <person name="Hu X."/>
            <person name="Broncel M."/>
            <person name="Young J.C."/>
            <person name="O'Shaughnessy W.J."/>
            <person name="Borek D."/>
            <person name="Treeck M."/>
            <person name="Reese M.L."/>
        </authorList>
    </citation>
    <scope>X-RAY CRYSTALLOGRAPHY (2.50 ANGSTROMS) OF 61-377</scope>
    <source>
        <strain evidence="6">RH</strain>
    </source>
</reference>
<gene>
    <name evidence="7" type="primary">BPK1</name>
    <name evidence="10" type="ORF">TGRH88_004990</name>
</gene>
<accession>A0A7J6KD88</accession>
<accession>A0A452CSY6</accession>
<protein>
    <recommendedName>
        <fullName evidence="7">Bradyzoite pseudokinase 1</fullName>
    </recommendedName>
    <alternativeName>
        <fullName evidence="8">Inactive serine/threonine-protein kinase BPK1</fullName>
    </alternativeName>
</protein>
<organism>
    <name type="scientific">Toxoplasma gondii</name>
    <dbReference type="NCBI Taxonomy" id="5811"/>
    <lineage>
        <taxon>Eukaryota</taxon>
        <taxon>Sar</taxon>
        <taxon>Alveolata</taxon>
        <taxon>Apicomplexa</taxon>
        <taxon>Conoidasida</taxon>
        <taxon>Coccidia</taxon>
        <taxon>Eucoccidiorida</taxon>
        <taxon>Eimeriorina</taxon>
        <taxon>Sarcocystidae</taxon>
        <taxon>Toxoplasma</taxon>
    </lineage>
</organism>
<evidence type="ECO:0000255" key="1"/>
<evidence type="ECO:0000255" key="2">
    <source>
        <dbReference type="PROSITE-ProRule" id="PRU00159"/>
    </source>
</evidence>
<evidence type="ECO:0000256" key="3">
    <source>
        <dbReference type="SAM" id="MobiDB-lite"/>
    </source>
</evidence>
<evidence type="ECO:0000269" key="4">
    <source>
    </source>
</evidence>
<evidence type="ECO:0000269" key="5">
    <source>
    </source>
</evidence>
<evidence type="ECO:0000269" key="6">
    <source>
    </source>
</evidence>
<evidence type="ECO:0000303" key="7">
    <source>
    </source>
</evidence>
<evidence type="ECO:0000305" key="8"/>
<evidence type="ECO:0000305" key="9">
    <source>
    </source>
</evidence>
<evidence type="ECO:0000312" key="10">
    <source>
        <dbReference type="EMBL" id="KAF4645395.1"/>
    </source>
</evidence>
<evidence type="ECO:0007744" key="11">
    <source>
        <dbReference type="PDB" id="6M7Z"/>
    </source>
</evidence>
<evidence type="ECO:0007829" key="12">
    <source>
        <dbReference type="PDB" id="6M7Z"/>
    </source>
</evidence>
<proteinExistence type="evidence at protein level"/>
<name>BPK1_TOXGO</name>